<reference key="1">
    <citation type="journal article" date="2006" name="BMC Genomics">
        <title>Comparative genome analysis: selection pressure on the Borrelia vls cassettes is essential for infectivity.</title>
        <authorList>
            <person name="Gloeckner G."/>
            <person name="Schulte-Spechtel U."/>
            <person name="Schilhabel M."/>
            <person name="Felder M."/>
            <person name="Suehnel J."/>
            <person name="Wilske B."/>
            <person name="Platzer M."/>
        </authorList>
    </citation>
    <scope>NUCLEOTIDE SEQUENCE [LARGE SCALE GENOMIC DNA]</scope>
    <source>
        <strain>PKo</strain>
    </source>
</reference>
<reference key="2">
    <citation type="journal article" date="2011" name="J. Bacteriol.">
        <title>Whole-genome sequences of two Borrelia afzelii and two Borrelia garinii Lyme disease agent isolates.</title>
        <authorList>
            <person name="Casjens S.R."/>
            <person name="Mongodin E.F."/>
            <person name="Qiu W.G."/>
            <person name="Dunn J.J."/>
            <person name="Luft B.J."/>
            <person name="Fraser-Liggett C.M."/>
            <person name="Schutzer S.E."/>
        </authorList>
    </citation>
    <scope>NUCLEOTIDE SEQUENCE [LARGE SCALE GENOMIC DNA]</scope>
    <source>
        <strain>PKo</strain>
    </source>
</reference>
<proteinExistence type="inferred from homology"/>
<evidence type="ECO:0000255" key="1">
    <source>
        <dbReference type="HAMAP-Rule" id="MF_02003"/>
    </source>
</evidence>
<dbReference type="EC" id="6.1.1.5" evidence="1"/>
<dbReference type="EMBL" id="CP000395">
    <property type="protein sequence ID" value="ABH02110.1"/>
    <property type="molecule type" value="Genomic_DNA"/>
</dbReference>
<dbReference type="EMBL" id="CP002933">
    <property type="protein sequence ID" value="AEL70049.1"/>
    <property type="molecule type" value="Genomic_DNA"/>
</dbReference>
<dbReference type="RefSeq" id="WP_011601260.1">
    <property type="nucleotide sequence ID" value="NC_008277.1"/>
</dbReference>
<dbReference type="SMR" id="Q0SM18"/>
<dbReference type="STRING" id="29518.BLA32_00060"/>
<dbReference type="KEGG" id="baf:BAPKO_0886"/>
<dbReference type="KEGG" id="bafz:BafPKo_0860"/>
<dbReference type="PATRIC" id="fig|390236.22.peg.821"/>
<dbReference type="eggNOG" id="COG0060">
    <property type="taxonomic scope" value="Bacteria"/>
</dbReference>
<dbReference type="HOGENOM" id="CLU_001493_1_1_12"/>
<dbReference type="OrthoDB" id="9810365at2"/>
<dbReference type="Proteomes" id="UP000005216">
    <property type="component" value="Chromosome"/>
</dbReference>
<dbReference type="GO" id="GO:0005737">
    <property type="term" value="C:cytoplasm"/>
    <property type="evidence" value="ECO:0007669"/>
    <property type="project" value="UniProtKB-SubCell"/>
</dbReference>
<dbReference type="GO" id="GO:0002161">
    <property type="term" value="F:aminoacyl-tRNA deacylase activity"/>
    <property type="evidence" value="ECO:0007669"/>
    <property type="project" value="InterPro"/>
</dbReference>
<dbReference type="GO" id="GO:0005524">
    <property type="term" value="F:ATP binding"/>
    <property type="evidence" value="ECO:0007669"/>
    <property type="project" value="UniProtKB-UniRule"/>
</dbReference>
<dbReference type="GO" id="GO:0004822">
    <property type="term" value="F:isoleucine-tRNA ligase activity"/>
    <property type="evidence" value="ECO:0007669"/>
    <property type="project" value="UniProtKB-UniRule"/>
</dbReference>
<dbReference type="GO" id="GO:0000049">
    <property type="term" value="F:tRNA binding"/>
    <property type="evidence" value="ECO:0007669"/>
    <property type="project" value="InterPro"/>
</dbReference>
<dbReference type="GO" id="GO:0008270">
    <property type="term" value="F:zinc ion binding"/>
    <property type="evidence" value="ECO:0007669"/>
    <property type="project" value="UniProtKB-UniRule"/>
</dbReference>
<dbReference type="GO" id="GO:0006428">
    <property type="term" value="P:isoleucyl-tRNA aminoacylation"/>
    <property type="evidence" value="ECO:0007669"/>
    <property type="project" value="UniProtKB-UniRule"/>
</dbReference>
<dbReference type="CDD" id="cd07961">
    <property type="entry name" value="Anticodon_Ia_Ile_ABEc"/>
    <property type="match status" value="1"/>
</dbReference>
<dbReference type="CDD" id="cd00818">
    <property type="entry name" value="IleRS_core"/>
    <property type="match status" value="1"/>
</dbReference>
<dbReference type="FunFam" id="3.40.50.620:FF:000063">
    <property type="entry name" value="Isoleucine--tRNA ligase"/>
    <property type="match status" value="1"/>
</dbReference>
<dbReference type="FunFam" id="3.40.50.620:FF:000075">
    <property type="entry name" value="Isoleucine--tRNA ligase"/>
    <property type="match status" value="1"/>
</dbReference>
<dbReference type="Gene3D" id="3.40.50.620">
    <property type="entry name" value="HUPs"/>
    <property type="match status" value="2"/>
</dbReference>
<dbReference type="Gene3D" id="1.10.730.10">
    <property type="entry name" value="Isoleucyl-tRNA Synthetase, Domain 1"/>
    <property type="match status" value="1"/>
</dbReference>
<dbReference type="HAMAP" id="MF_02003">
    <property type="entry name" value="Ile_tRNA_synth_type2"/>
    <property type="match status" value="1"/>
</dbReference>
<dbReference type="InterPro" id="IPR002300">
    <property type="entry name" value="aa-tRNA-synth_Ia"/>
</dbReference>
<dbReference type="InterPro" id="IPR033709">
    <property type="entry name" value="Anticodon_Ile_ABEc"/>
</dbReference>
<dbReference type="InterPro" id="IPR002301">
    <property type="entry name" value="Ile-tRNA-ligase"/>
</dbReference>
<dbReference type="InterPro" id="IPR023586">
    <property type="entry name" value="Ile-tRNA-ligase_type2"/>
</dbReference>
<dbReference type="InterPro" id="IPR013155">
    <property type="entry name" value="M/V/L/I-tRNA-synth_anticd-bd"/>
</dbReference>
<dbReference type="InterPro" id="IPR014729">
    <property type="entry name" value="Rossmann-like_a/b/a_fold"/>
</dbReference>
<dbReference type="InterPro" id="IPR009080">
    <property type="entry name" value="tRNAsynth_Ia_anticodon-bd"/>
</dbReference>
<dbReference type="InterPro" id="IPR009008">
    <property type="entry name" value="Val/Leu/Ile-tRNA-synth_edit"/>
</dbReference>
<dbReference type="NCBIfam" id="TIGR00392">
    <property type="entry name" value="ileS"/>
    <property type="match status" value="1"/>
</dbReference>
<dbReference type="PANTHER" id="PTHR42780:SF1">
    <property type="entry name" value="ISOLEUCINE--TRNA LIGASE, CYTOPLASMIC"/>
    <property type="match status" value="1"/>
</dbReference>
<dbReference type="PANTHER" id="PTHR42780">
    <property type="entry name" value="SOLEUCYL-TRNA SYNTHETASE"/>
    <property type="match status" value="1"/>
</dbReference>
<dbReference type="Pfam" id="PF08264">
    <property type="entry name" value="Anticodon_1"/>
    <property type="match status" value="1"/>
</dbReference>
<dbReference type="Pfam" id="PF19302">
    <property type="entry name" value="DUF5915"/>
    <property type="match status" value="1"/>
</dbReference>
<dbReference type="Pfam" id="PF00133">
    <property type="entry name" value="tRNA-synt_1"/>
    <property type="match status" value="1"/>
</dbReference>
<dbReference type="PRINTS" id="PR00984">
    <property type="entry name" value="TRNASYNTHILE"/>
</dbReference>
<dbReference type="SUPFAM" id="SSF47323">
    <property type="entry name" value="Anticodon-binding domain of a subclass of class I aminoacyl-tRNA synthetases"/>
    <property type="match status" value="2"/>
</dbReference>
<dbReference type="SUPFAM" id="SSF52374">
    <property type="entry name" value="Nucleotidylyl transferase"/>
    <property type="match status" value="1"/>
</dbReference>
<dbReference type="SUPFAM" id="SSF50677">
    <property type="entry name" value="ValRS/IleRS/LeuRS editing domain"/>
    <property type="match status" value="1"/>
</dbReference>
<name>SYI_BORAP</name>
<feature type="chain" id="PRO_1000022148" description="Isoleucine--tRNA ligase">
    <location>
        <begin position="1"/>
        <end position="1042"/>
    </location>
</feature>
<feature type="short sequence motif" description="'HIGH' region">
    <location>
        <begin position="48"/>
        <end position="58"/>
    </location>
</feature>
<feature type="short sequence motif" description="'KMSKS' region">
    <location>
        <begin position="594"/>
        <end position="598"/>
    </location>
</feature>
<feature type="binding site" evidence="1">
    <location>
        <position position="597"/>
    </location>
    <ligand>
        <name>ATP</name>
        <dbReference type="ChEBI" id="CHEBI:30616"/>
    </ligand>
</feature>
<comment type="function">
    <text evidence="1">Catalyzes the attachment of isoleucine to tRNA(Ile). As IleRS can inadvertently accommodate and process structurally similar amino acids such as valine, to avoid such errors it has two additional distinct tRNA(Ile)-dependent editing activities. One activity is designated as 'pretransfer' editing and involves the hydrolysis of activated Val-AMP. The other activity is designated 'posttransfer' editing and involves deacylation of mischarged Val-tRNA(Ile).</text>
</comment>
<comment type="catalytic activity">
    <reaction evidence="1">
        <text>tRNA(Ile) + L-isoleucine + ATP = L-isoleucyl-tRNA(Ile) + AMP + diphosphate</text>
        <dbReference type="Rhea" id="RHEA:11060"/>
        <dbReference type="Rhea" id="RHEA-COMP:9666"/>
        <dbReference type="Rhea" id="RHEA-COMP:9695"/>
        <dbReference type="ChEBI" id="CHEBI:30616"/>
        <dbReference type="ChEBI" id="CHEBI:33019"/>
        <dbReference type="ChEBI" id="CHEBI:58045"/>
        <dbReference type="ChEBI" id="CHEBI:78442"/>
        <dbReference type="ChEBI" id="CHEBI:78528"/>
        <dbReference type="ChEBI" id="CHEBI:456215"/>
        <dbReference type="EC" id="6.1.1.5"/>
    </reaction>
</comment>
<comment type="cofactor">
    <cofactor evidence="1">
        <name>Zn(2+)</name>
        <dbReference type="ChEBI" id="CHEBI:29105"/>
    </cofactor>
</comment>
<comment type="subunit">
    <text evidence="1">Monomer.</text>
</comment>
<comment type="subcellular location">
    <subcellularLocation>
        <location evidence="1">Cytoplasm</location>
    </subcellularLocation>
</comment>
<comment type="domain">
    <text evidence="1">IleRS has two distinct active sites: one for aminoacylation and one for editing. The misactivated valine is translocated from the active site to the editing site, which sterically excludes the correctly activated isoleucine. The single editing site contains two valyl binding pockets, one specific for each substrate (Val-AMP or Val-tRNA(Ile)).</text>
</comment>
<comment type="similarity">
    <text evidence="1">Belongs to the class-I aminoacyl-tRNA synthetase family. IleS type 2 subfamily.</text>
</comment>
<gene>
    <name evidence="1" type="primary">ileS</name>
    <name type="ordered locus">BAPKO_0886</name>
    <name type="ordered locus">BafPKo_0860</name>
</gene>
<accession>Q0SM18</accession>
<accession>G0IQM4</accession>
<organism>
    <name type="scientific">Borreliella afzelii (strain PKo)</name>
    <name type="common">Borrelia afzelii</name>
    <dbReference type="NCBI Taxonomy" id="390236"/>
    <lineage>
        <taxon>Bacteria</taxon>
        <taxon>Pseudomonadati</taxon>
        <taxon>Spirochaetota</taxon>
        <taxon>Spirochaetia</taxon>
        <taxon>Spirochaetales</taxon>
        <taxon>Borreliaceae</taxon>
        <taxon>Borreliella</taxon>
    </lineage>
</organism>
<keyword id="KW-0030">Aminoacyl-tRNA synthetase</keyword>
<keyword id="KW-0067">ATP-binding</keyword>
<keyword id="KW-0963">Cytoplasm</keyword>
<keyword id="KW-0436">Ligase</keyword>
<keyword id="KW-0479">Metal-binding</keyword>
<keyword id="KW-0547">Nucleotide-binding</keyword>
<keyword id="KW-0648">Protein biosynthesis</keyword>
<keyword id="KW-0862">Zinc</keyword>
<sequence>MFKKVENKANFPKIEEKILKFWNDNKIFEKSMKQREGCEEFTFYDGPPFATGLPHFGHFVPNTIKDIIPRYQTMRGKYVKRNFGWDTHGLPVEYEVEKKLGISGKYEIENYGIENFNKECKKIVLRYTEEWKNIILRLGRWVDFEKGYKTMDINFMESVWWVFKSLYNKGLIYESYYVLPYSPKLATPLSNFEVNLGEYKEVNDPSLTIKFKIKDKNEYLLAWTTTPWTLPSNLGIAVGQEIEYSKIFDKKKEEILILGSKKLDSYYDDENSYTIIEKFKGSKLEGIEYEPIFNYFLEQKDKGAFKVHMADYVTTDDGTGIVHIAPFGEEDYRILKKHTNVDIIDPLDAECKFTNRVKDFQGLFVKDADKKIIENLKLRNFLFKRENYLHRYPFCYRTNYPIIYRPISSWFVNVEKIKTKLLEVNEKINWMPAHLKKGRFGKWLENAKDWAISRNRFWGNPIPIWICSKTGKKICVGSKKELESLSGQKIEDLHKDKVDKITWPSKDGGTFIRTSEVLDCWFESGAMPYASNHYPFTNESNFKNIFPADFIAEGLDQTRGWFYTLTILGVSLFESTAFKNVIVNGLVLSSDGRKMSKSFKNYTDPMEVINTFGADALRLYLIMSPVVKADDLKYSDNGVRDVLKNIIIPIWNAYSFFTTYAIIDKFQPPKNLNLVKNNNLDKWIISELESLKKILNNEIDKYNLTKSIESLLEFIDKLNNWYIRRSRRRFWKSENDKDKNDAYETLYYAIKTLMILLAPFIPFITEEIYQNLKTDEDKQSIHLNDYPKANENLINKTIEEKINLARKITSMARSLRSLHNIKIRMPISMIYIVTKNQNEQNMLIEMQEIILDEINAKEMKIKSNEEDLITYKAKANFKELGKKLGKDMKTVSIEISKLKNEDIIKIINGISYEIKVGNTKYYLSLNDIILEREEKDNLKVINEESITIGIDSLITKELYLEGLTREFVRQIQNLRKEKNFDVSDRINLYIENNETLQEILNKFEKYIKTETLALNIIFNKSKLEKKINLDDNIFTIIGIEKC</sequence>
<protein>
    <recommendedName>
        <fullName evidence="1">Isoleucine--tRNA ligase</fullName>
        <ecNumber evidence="1">6.1.1.5</ecNumber>
    </recommendedName>
    <alternativeName>
        <fullName evidence="1">Isoleucyl-tRNA synthetase</fullName>
        <shortName evidence="1">IleRS</shortName>
    </alternativeName>
</protein>